<sequence length="307" mass="32251">MDDFISISLLSLAMLVGCYVAGIIPLAVNFSEERLKLVTVLGAGLLCGTALAVIVPEGVHALYEDILEGKHHQASETHNVIASDKAAEKSVVHEHEHSHDHTQLHAYIGVSLVLGFVFMLLVDQIGNSHVHSTDDPEAARSSNSKITTTLGLVVHAAADGVALGAAASTSQTSVQLIVFVAIMLHKAPAAFGLVSFLMHAGLERNRIRKHLLVFALAAPVMSMVTYLGLSKSSKEALSEVNATGVAMLFSAGTFLYVATVHVLPEVGGIGHSHKPDATGGRGLSRLEVAALVLGCLIPLILSVGHQH</sequence>
<name>S39A9_HUMAN</name>
<accession>Q9NUM3</accession>
<accession>G3V5J8</accession>
<accession>Q53HN3</accession>
<accession>Q5MJQ0</accession>
<accession>Q6P2Q1</accession>
<accession>Q86WY2</accession>
<proteinExistence type="evidence at protein level"/>
<gene>
    <name evidence="15" type="primary">SLC39A9</name>
    <name type="synonym">ZIP9</name>
    <name type="ORF">UNQ714/PRO1377</name>
</gene>
<reference key="1">
    <citation type="journal article" date="2003" name="Genome Res.">
        <title>The secreted protein discovery initiative (SPDI), a large-scale effort to identify novel human secreted and transmembrane proteins: a bioinformatics assessment.</title>
        <authorList>
            <person name="Clark H.F."/>
            <person name="Gurney A.L."/>
            <person name="Abaya E."/>
            <person name="Baker K."/>
            <person name="Baldwin D.T."/>
            <person name="Brush J."/>
            <person name="Chen J."/>
            <person name="Chow B."/>
            <person name="Chui C."/>
            <person name="Crowley C."/>
            <person name="Currell B."/>
            <person name="Deuel B."/>
            <person name="Dowd P."/>
            <person name="Eaton D."/>
            <person name="Foster J.S."/>
            <person name="Grimaldi C."/>
            <person name="Gu Q."/>
            <person name="Hass P.E."/>
            <person name="Heldens S."/>
            <person name="Huang A."/>
            <person name="Kim H.S."/>
            <person name="Klimowski L."/>
            <person name="Jin Y."/>
            <person name="Johnson S."/>
            <person name="Lee J."/>
            <person name="Lewis L."/>
            <person name="Liao D."/>
            <person name="Mark M.R."/>
            <person name="Robbie E."/>
            <person name="Sanchez C."/>
            <person name="Schoenfeld J."/>
            <person name="Seshagiri S."/>
            <person name="Simmons L."/>
            <person name="Singh J."/>
            <person name="Smith V."/>
            <person name="Stinson J."/>
            <person name="Vagts A."/>
            <person name="Vandlen R.L."/>
            <person name="Watanabe C."/>
            <person name="Wieand D."/>
            <person name="Woods K."/>
            <person name="Xie M.-H."/>
            <person name="Yansura D.G."/>
            <person name="Yi S."/>
            <person name="Yu G."/>
            <person name="Yuan J."/>
            <person name="Zhang M."/>
            <person name="Zhang Z."/>
            <person name="Goddard A.D."/>
            <person name="Wood W.I."/>
            <person name="Godowski P.J."/>
            <person name="Gray A.M."/>
        </authorList>
    </citation>
    <scope>NUCLEOTIDE SEQUENCE [LARGE SCALE MRNA] (ISOFORMS 1 AND 3)</scope>
</reference>
<reference key="2">
    <citation type="journal article" date="2004" name="Nat. Genet.">
        <title>Complete sequencing and characterization of 21,243 full-length human cDNAs.</title>
        <authorList>
            <person name="Ota T."/>
            <person name="Suzuki Y."/>
            <person name="Nishikawa T."/>
            <person name="Otsuki T."/>
            <person name="Sugiyama T."/>
            <person name="Irie R."/>
            <person name="Wakamatsu A."/>
            <person name="Hayashi K."/>
            <person name="Sato H."/>
            <person name="Nagai K."/>
            <person name="Kimura K."/>
            <person name="Makita H."/>
            <person name="Sekine M."/>
            <person name="Obayashi M."/>
            <person name="Nishi T."/>
            <person name="Shibahara T."/>
            <person name="Tanaka T."/>
            <person name="Ishii S."/>
            <person name="Yamamoto J."/>
            <person name="Saito K."/>
            <person name="Kawai Y."/>
            <person name="Isono Y."/>
            <person name="Nakamura Y."/>
            <person name="Nagahari K."/>
            <person name="Murakami K."/>
            <person name="Yasuda T."/>
            <person name="Iwayanagi T."/>
            <person name="Wagatsuma M."/>
            <person name="Shiratori A."/>
            <person name="Sudo H."/>
            <person name="Hosoiri T."/>
            <person name="Kaku Y."/>
            <person name="Kodaira H."/>
            <person name="Kondo H."/>
            <person name="Sugawara M."/>
            <person name="Takahashi M."/>
            <person name="Kanda K."/>
            <person name="Yokoi T."/>
            <person name="Furuya T."/>
            <person name="Kikkawa E."/>
            <person name="Omura Y."/>
            <person name="Abe K."/>
            <person name="Kamihara K."/>
            <person name="Katsuta N."/>
            <person name="Sato K."/>
            <person name="Tanikawa M."/>
            <person name="Yamazaki M."/>
            <person name="Ninomiya K."/>
            <person name="Ishibashi T."/>
            <person name="Yamashita H."/>
            <person name="Murakawa K."/>
            <person name="Fujimori K."/>
            <person name="Tanai H."/>
            <person name="Kimata M."/>
            <person name="Watanabe M."/>
            <person name="Hiraoka S."/>
            <person name="Chiba Y."/>
            <person name="Ishida S."/>
            <person name="Ono Y."/>
            <person name="Takiguchi S."/>
            <person name="Watanabe S."/>
            <person name="Yosida M."/>
            <person name="Hotuta T."/>
            <person name="Kusano J."/>
            <person name="Kanehori K."/>
            <person name="Takahashi-Fujii A."/>
            <person name="Hara H."/>
            <person name="Tanase T.-O."/>
            <person name="Nomura Y."/>
            <person name="Togiya S."/>
            <person name="Komai F."/>
            <person name="Hara R."/>
            <person name="Takeuchi K."/>
            <person name="Arita M."/>
            <person name="Imose N."/>
            <person name="Musashino K."/>
            <person name="Yuuki H."/>
            <person name="Oshima A."/>
            <person name="Sasaki N."/>
            <person name="Aotsuka S."/>
            <person name="Yoshikawa Y."/>
            <person name="Matsunawa H."/>
            <person name="Ichihara T."/>
            <person name="Shiohata N."/>
            <person name="Sano S."/>
            <person name="Moriya S."/>
            <person name="Momiyama H."/>
            <person name="Satoh N."/>
            <person name="Takami S."/>
            <person name="Terashima Y."/>
            <person name="Suzuki O."/>
            <person name="Nakagawa S."/>
            <person name="Senoh A."/>
            <person name="Mizoguchi H."/>
            <person name="Goto Y."/>
            <person name="Shimizu F."/>
            <person name="Wakebe H."/>
            <person name="Hishigaki H."/>
            <person name="Watanabe T."/>
            <person name="Sugiyama A."/>
            <person name="Takemoto M."/>
            <person name="Kawakami B."/>
            <person name="Yamazaki M."/>
            <person name="Watanabe K."/>
            <person name="Kumagai A."/>
            <person name="Itakura S."/>
            <person name="Fukuzumi Y."/>
            <person name="Fujimori Y."/>
            <person name="Komiyama M."/>
            <person name="Tashiro H."/>
            <person name="Tanigami A."/>
            <person name="Fujiwara T."/>
            <person name="Ono T."/>
            <person name="Yamada K."/>
            <person name="Fujii Y."/>
            <person name="Ozaki K."/>
            <person name="Hirao M."/>
            <person name="Ohmori Y."/>
            <person name="Kawabata A."/>
            <person name="Hikiji T."/>
            <person name="Kobatake N."/>
            <person name="Inagaki H."/>
            <person name="Ikema Y."/>
            <person name="Okamoto S."/>
            <person name="Okitani R."/>
            <person name="Kawakami T."/>
            <person name="Noguchi S."/>
            <person name="Itoh T."/>
            <person name="Shigeta K."/>
            <person name="Senba T."/>
            <person name="Matsumura K."/>
            <person name="Nakajima Y."/>
            <person name="Mizuno T."/>
            <person name="Morinaga M."/>
            <person name="Sasaki M."/>
            <person name="Togashi T."/>
            <person name="Oyama M."/>
            <person name="Hata H."/>
            <person name="Watanabe M."/>
            <person name="Komatsu T."/>
            <person name="Mizushima-Sugano J."/>
            <person name="Satoh T."/>
            <person name="Shirai Y."/>
            <person name="Takahashi Y."/>
            <person name="Nakagawa K."/>
            <person name="Okumura K."/>
            <person name="Nagase T."/>
            <person name="Nomura N."/>
            <person name="Kikuchi H."/>
            <person name="Masuho Y."/>
            <person name="Yamashita R."/>
            <person name="Nakai K."/>
            <person name="Yada T."/>
            <person name="Nakamura Y."/>
            <person name="Ohara O."/>
            <person name="Isogai T."/>
            <person name="Sugano S."/>
        </authorList>
    </citation>
    <scope>NUCLEOTIDE SEQUENCE [LARGE SCALE MRNA] (ISOFORM 1)</scope>
    <source>
        <tissue>Placenta</tissue>
    </source>
</reference>
<reference key="3">
    <citation type="submission" date="2004-10" db="EMBL/GenBank/DDBJ databases">
        <authorList>
            <person name="Lin L."/>
            <person name="Zhong G."/>
            <person name="Ke R."/>
            <person name="Li H."/>
            <person name="Shen C."/>
            <person name="Nong W."/>
            <person name="Zhou G."/>
            <person name="Yang S."/>
        </authorList>
    </citation>
    <scope>NUCLEOTIDE SEQUENCE [LARGE SCALE MRNA] (ISOFORM 2)</scope>
    <scope>VARIANT THR-221</scope>
</reference>
<reference key="4">
    <citation type="journal article" date="2003" name="Nature">
        <title>The DNA sequence and analysis of human chromosome 14.</title>
        <authorList>
            <person name="Heilig R."/>
            <person name="Eckenberg R."/>
            <person name="Petit J.-L."/>
            <person name="Fonknechten N."/>
            <person name="Da Silva C."/>
            <person name="Cattolico L."/>
            <person name="Levy M."/>
            <person name="Barbe V."/>
            <person name="De Berardinis V."/>
            <person name="Ureta-Vidal A."/>
            <person name="Pelletier E."/>
            <person name="Vico V."/>
            <person name="Anthouard V."/>
            <person name="Rowen L."/>
            <person name="Madan A."/>
            <person name="Qin S."/>
            <person name="Sun H."/>
            <person name="Du H."/>
            <person name="Pepin K."/>
            <person name="Artiguenave F."/>
            <person name="Robert C."/>
            <person name="Cruaud C."/>
            <person name="Bruels T."/>
            <person name="Jaillon O."/>
            <person name="Friedlander L."/>
            <person name="Samson G."/>
            <person name="Brottier P."/>
            <person name="Cure S."/>
            <person name="Segurens B."/>
            <person name="Aniere F."/>
            <person name="Samain S."/>
            <person name="Crespeau H."/>
            <person name="Abbasi N."/>
            <person name="Aiach N."/>
            <person name="Boscus D."/>
            <person name="Dickhoff R."/>
            <person name="Dors M."/>
            <person name="Dubois I."/>
            <person name="Friedman C."/>
            <person name="Gouyvenoux M."/>
            <person name="James R."/>
            <person name="Madan A."/>
            <person name="Mairey-Estrada B."/>
            <person name="Mangenot S."/>
            <person name="Martins N."/>
            <person name="Menard M."/>
            <person name="Oztas S."/>
            <person name="Ratcliffe A."/>
            <person name="Shaffer T."/>
            <person name="Trask B."/>
            <person name="Vacherie B."/>
            <person name="Bellemere C."/>
            <person name="Belser C."/>
            <person name="Besnard-Gonnet M."/>
            <person name="Bartol-Mavel D."/>
            <person name="Boutard M."/>
            <person name="Briez-Silla S."/>
            <person name="Combette S."/>
            <person name="Dufosse-Laurent V."/>
            <person name="Ferron C."/>
            <person name="Lechaplais C."/>
            <person name="Louesse C."/>
            <person name="Muselet D."/>
            <person name="Magdelenat G."/>
            <person name="Pateau E."/>
            <person name="Petit E."/>
            <person name="Sirvain-Trukniewicz P."/>
            <person name="Trybou A."/>
            <person name="Vega-Czarny N."/>
            <person name="Bataille E."/>
            <person name="Bluet E."/>
            <person name="Bordelais I."/>
            <person name="Dubois M."/>
            <person name="Dumont C."/>
            <person name="Guerin T."/>
            <person name="Haffray S."/>
            <person name="Hammadi R."/>
            <person name="Muanga J."/>
            <person name="Pellouin V."/>
            <person name="Robert D."/>
            <person name="Wunderle E."/>
            <person name="Gauguet G."/>
            <person name="Roy A."/>
            <person name="Sainte-Marthe L."/>
            <person name="Verdier J."/>
            <person name="Verdier-Discala C."/>
            <person name="Hillier L.W."/>
            <person name="Fulton L."/>
            <person name="McPherson J."/>
            <person name="Matsuda F."/>
            <person name="Wilson R."/>
            <person name="Scarpelli C."/>
            <person name="Gyapay G."/>
            <person name="Wincker P."/>
            <person name="Saurin W."/>
            <person name="Quetier F."/>
            <person name="Waterston R."/>
            <person name="Hood L."/>
            <person name="Weissenbach J."/>
        </authorList>
    </citation>
    <scope>NUCLEOTIDE SEQUENCE [LARGE SCALE GENOMIC DNA] (ISOFORM 3)</scope>
</reference>
<reference key="5">
    <citation type="journal article" date="2004" name="Genome Res.">
        <title>The status, quality, and expansion of the NIH full-length cDNA project: the Mammalian Gene Collection (MGC).</title>
        <authorList>
            <consortium name="The MGC Project Team"/>
        </authorList>
    </citation>
    <scope>NUCLEOTIDE SEQUENCE [LARGE SCALE MRNA] (ISOFORM 1)</scope>
    <scope>VARIANT CYS-285</scope>
    <source>
        <tissue>Duodenum</tissue>
        <tissue>Skin</tissue>
    </source>
</reference>
<reference key="6">
    <citation type="journal article" date="2009" name="Biosci. Biotechnol. Biochem.">
        <title>SLC39A9 (ZIP9) regulates zinc homeostasis in the secretory pathway: characterization of the ZIP subfamily I protein in vertebrate cells.</title>
        <authorList>
            <person name="Matsuura W."/>
            <person name="Yamazaki T."/>
            <person name="Yamaguchi-Iwai Y."/>
            <person name="Masuda S."/>
            <person name="Nagao M."/>
            <person name="Andrews G.K."/>
            <person name="Kambe T."/>
        </authorList>
    </citation>
    <scope>FUNCTION</scope>
    <scope>TRANSPORTER ACTIVITY</scope>
    <scope>SUBCELLULAR LOCATION</scope>
</reference>
<reference key="7">
    <citation type="journal article" date="2013" name="PLoS ONE">
        <title>Essential role of the zinc transporter ZIP9/SLC39A9 in regulating the activations of Akt and Erk in B-cell receptor signaling pathway in DT40 cells.</title>
        <authorList>
            <person name="Taniguchi M."/>
            <person name="Fukunaka A."/>
            <person name="Hagihara M."/>
            <person name="Watanabe K."/>
            <person name="Kamino S."/>
            <person name="Kambe T."/>
            <person name="Enomoto S."/>
            <person name="Hiromura M."/>
        </authorList>
    </citation>
    <scope>FUNCTION</scope>
</reference>
<reference key="8">
    <citation type="journal article" date="2014" name="Endocrinology">
        <title>Identification and characterization of membrane androgen receptors in the ZIP9 zinc transporter subfamily: II. Role of human ZIP9 in testosterone-induced prostate and breast cancer cell apoptosis.</title>
        <authorList>
            <person name="Thomas P."/>
            <person name="Pang Y."/>
            <person name="Dong J."/>
            <person name="Berg A.H."/>
        </authorList>
    </citation>
    <scope>FUNCTION</scope>
    <scope>TRANSPORTER ACTIVITY</scope>
    <scope>SUBCELLULAR LOCATION</scope>
    <scope>INDUCTION</scope>
    <scope>TISSUE SPECIFICITY</scope>
</reference>
<reference key="9">
    <citation type="journal article" date="2017" name="Mol. Cell. Endocrinol.">
        <title>Membrane androgen receptor characteristics of human ZIP9 (SLC39A) zinc transporter in prostate cancer cells: Androgen-specific activation and involvement of an inhibitory G protein in zinc and MAP kinase signaling.</title>
        <authorList>
            <person name="Thomas P."/>
            <person name="Pang Y."/>
            <person name="Dong J."/>
        </authorList>
    </citation>
    <scope>FUNCTION</scope>
    <scope>TRANSPORTER ACTIVITY</scope>
</reference>
<reference key="10">
    <citation type="journal article" date="2021" name="Mol. Cell. Endocrinol.">
        <title>Androgens promote vascular endothelial cell proliferation through activation of a ZIP9-dependent inhibitory G protein/PI3K-Akt/Erk/cyclin D1 pathway.</title>
        <authorList>
            <person name="Converse A."/>
            <person name="Thomas P."/>
        </authorList>
    </citation>
    <scope>FUNCTION</scope>
    <scope>SUBCELLULAR LOCATION</scope>
</reference>
<dbReference type="EMBL" id="AY358687">
    <property type="protein sequence ID" value="AAQ89050.1"/>
    <property type="molecule type" value="mRNA"/>
</dbReference>
<dbReference type="EMBL" id="AK002136">
    <property type="protein sequence ID" value="BAA92100.1"/>
    <property type="molecule type" value="mRNA"/>
</dbReference>
<dbReference type="EMBL" id="AK222547">
    <property type="protein sequence ID" value="BAD96267.1"/>
    <property type="molecule type" value="mRNA"/>
</dbReference>
<dbReference type="EMBL" id="AY780789">
    <property type="protein sequence ID" value="AAV98359.1"/>
    <property type="molecule type" value="mRNA"/>
</dbReference>
<dbReference type="EMBL" id="AL157996">
    <property type="status" value="NOT_ANNOTATED_CDS"/>
    <property type="molecule type" value="Genomic_DNA"/>
</dbReference>
<dbReference type="EMBL" id="BC047682">
    <property type="protein sequence ID" value="AAH47682.1"/>
    <property type="molecule type" value="mRNA"/>
</dbReference>
<dbReference type="EMBL" id="BC064383">
    <property type="protein sequence ID" value="AAH64383.1"/>
    <property type="molecule type" value="mRNA"/>
</dbReference>
<dbReference type="CCDS" id="CCDS58327.1">
    <molecule id="Q9NUM3-3"/>
</dbReference>
<dbReference type="CCDS" id="CCDS58328.1">
    <molecule id="Q9NUM3-2"/>
</dbReference>
<dbReference type="CCDS" id="CCDS9795.1">
    <molecule id="Q9NUM3-1"/>
</dbReference>
<dbReference type="RefSeq" id="NP_001239077.1">
    <molecule id="Q9NUM3-2"/>
    <property type="nucleotide sequence ID" value="NM_001252148.2"/>
</dbReference>
<dbReference type="RefSeq" id="NP_001239079.1">
    <molecule id="Q9NUM3-3"/>
    <property type="nucleotide sequence ID" value="NM_001252150.2"/>
</dbReference>
<dbReference type="RefSeq" id="NP_001239080.1">
    <property type="nucleotide sequence ID" value="NM_001252151.1"/>
</dbReference>
<dbReference type="RefSeq" id="NP_001239081.1">
    <property type="nucleotide sequence ID" value="NM_001252152.1"/>
</dbReference>
<dbReference type="RefSeq" id="NP_060845.2">
    <molecule id="Q9NUM3-1"/>
    <property type="nucleotide sequence ID" value="NM_018375.4"/>
</dbReference>
<dbReference type="SMR" id="Q9NUM3"/>
<dbReference type="BioGRID" id="120615">
    <property type="interactions" value="135"/>
</dbReference>
<dbReference type="FunCoup" id="Q9NUM3">
    <property type="interactions" value="2937"/>
</dbReference>
<dbReference type="IntAct" id="Q9NUM3">
    <property type="interactions" value="87"/>
</dbReference>
<dbReference type="MINT" id="Q9NUM3"/>
<dbReference type="STRING" id="9606.ENSP00000336887"/>
<dbReference type="DrugBank" id="DB14533">
    <property type="generic name" value="Zinc chloride"/>
</dbReference>
<dbReference type="DrugBank" id="DB14548">
    <property type="generic name" value="Zinc sulfate, unspecified form"/>
</dbReference>
<dbReference type="TCDB" id="2.A.5.6.1">
    <property type="family name" value="the zinc (zn(2+))-iron (fe(2+)) permease (zip) family"/>
</dbReference>
<dbReference type="GlyCosmos" id="Q9NUM3">
    <property type="glycosylation" value="2 sites, No reported glycans"/>
</dbReference>
<dbReference type="GlyGen" id="Q9NUM3">
    <property type="glycosylation" value="4 sites, 1 O-linked glycan (2 sites)"/>
</dbReference>
<dbReference type="iPTMnet" id="Q9NUM3"/>
<dbReference type="PhosphoSitePlus" id="Q9NUM3"/>
<dbReference type="BioMuta" id="SLC39A9"/>
<dbReference type="DMDM" id="156633628"/>
<dbReference type="jPOST" id="Q9NUM3"/>
<dbReference type="MassIVE" id="Q9NUM3"/>
<dbReference type="PaxDb" id="9606-ENSP00000336887"/>
<dbReference type="PeptideAtlas" id="Q9NUM3"/>
<dbReference type="ProteomicsDB" id="33545"/>
<dbReference type="ProteomicsDB" id="82693">
    <molecule id="Q9NUM3-1"/>
</dbReference>
<dbReference type="ProteomicsDB" id="82694">
    <molecule id="Q9NUM3-2"/>
</dbReference>
<dbReference type="Pumba" id="Q9NUM3"/>
<dbReference type="TopDownProteomics" id="Q9NUM3-2">
    <molecule id="Q9NUM3-2"/>
</dbReference>
<dbReference type="Antibodypedia" id="107">
    <property type="antibodies" value="136 antibodies from 30 providers"/>
</dbReference>
<dbReference type="DNASU" id="55334"/>
<dbReference type="Ensembl" id="ENST00000336643.10">
    <molecule id="Q9NUM3-1"/>
    <property type="protein sequence ID" value="ENSP00000336887.5"/>
    <property type="gene ID" value="ENSG00000029364.12"/>
</dbReference>
<dbReference type="Ensembl" id="ENST00000555840.5">
    <molecule id="Q9NUM3-1"/>
    <property type="protein sequence ID" value="ENSP00000450639.1"/>
    <property type="gene ID" value="ENSG00000029364.12"/>
</dbReference>
<dbReference type="Ensembl" id="ENST00000556605.5">
    <molecule id="Q9NUM3-3"/>
    <property type="protein sequence ID" value="ENSP00000452385.1"/>
    <property type="gene ID" value="ENSG00000029364.12"/>
</dbReference>
<dbReference type="Ensembl" id="ENST00000557046.1">
    <molecule id="Q9NUM3-2"/>
    <property type="protein sequence ID" value="ENSP00000451833.1"/>
    <property type="gene ID" value="ENSG00000029364.12"/>
</dbReference>
<dbReference type="GeneID" id="55334"/>
<dbReference type="KEGG" id="hsa:55334"/>
<dbReference type="MANE-Select" id="ENST00000336643.10">
    <property type="protein sequence ID" value="ENSP00000336887.5"/>
    <property type="RefSeq nucleotide sequence ID" value="NM_018375.5"/>
    <property type="RefSeq protein sequence ID" value="NP_060845.2"/>
</dbReference>
<dbReference type="UCSC" id="uc001xle.5">
    <molecule id="Q9NUM3-1"/>
    <property type="organism name" value="human"/>
</dbReference>
<dbReference type="AGR" id="HGNC:20182"/>
<dbReference type="CTD" id="55334"/>
<dbReference type="DisGeNET" id="55334"/>
<dbReference type="GeneCards" id="SLC39A9"/>
<dbReference type="HGNC" id="HGNC:20182">
    <property type="gene designation" value="SLC39A9"/>
</dbReference>
<dbReference type="HPA" id="ENSG00000029364">
    <property type="expression patterns" value="Low tissue specificity"/>
</dbReference>
<dbReference type="MIM" id="619116">
    <property type="type" value="gene"/>
</dbReference>
<dbReference type="neXtProt" id="NX_Q9NUM3"/>
<dbReference type="OpenTargets" id="ENSG00000029364"/>
<dbReference type="PharmGKB" id="PA134889179"/>
<dbReference type="VEuPathDB" id="HostDB:ENSG00000029364"/>
<dbReference type="eggNOG" id="KOG3907">
    <property type="taxonomic scope" value="Eukaryota"/>
</dbReference>
<dbReference type="GeneTree" id="ENSGT00390000010094"/>
<dbReference type="InParanoid" id="Q9NUM3"/>
<dbReference type="OMA" id="DDFPSIC"/>
<dbReference type="OrthoDB" id="19859at2759"/>
<dbReference type="PAN-GO" id="Q9NUM3">
    <property type="GO annotations" value="0 GO annotations based on evolutionary models"/>
</dbReference>
<dbReference type="PhylomeDB" id="Q9NUM3"/>
<dbReference type="TreeFam" id="TF315051"/>
<dbReference type="PathwayCommons" id="Q9NUM3"/>
<dbReference type="SignaLink" id="Q9NUM3"/>
<dbReference type="BioGRID-ORCS" id="55334">
    <property type="hits" value="56 hits in 1160 CRISPR screens"/>
</dbReference>
<dbReference type="ChiTaRS" id="SLC39A9">
    <property type="organism name" value="human"/>
</dbReference>
<dbReference type="GenomeRNAi" id="55334"/>
<dbReference type="Pharos" id="Q9NUM3">
    <property type="development level" value="Tbio"/>
</dbReference>
<dbReference type="PRO" id="PR:Q9NUM3"/>
<dbReference type="Proteomes" id="UP000005640">
    <property type="component" value="Chromosome 14"/>
</dbReference>
<dbReference type="RNAct" id="Q9NUM3">
    <property type="molecule type" value="protein"/>
</dbReference>
<dbReference type="Bgee" id="ENSG00000029364">
    <property type="expression patterns" value="Expressed in parotid gland and 186 other cell types or tissues"/>
</dbReference>
<dbReference type="ExpressionAtlas" id="Q9NUM3">
    <property type="expression patterns" value="baseline and differential"/>
</dbReference>
<dbReference type="GO" id="GO:0031966">
    <property type="term" value="C:mitochondrial membrane"/>
    <property type="evidence" value="ECO:0000314"/>
    <property type="project" value="UniProtKB"/>
</dbReference>
<dbReference type="GO" id="GO:0005739">
    <property type="term" value="C:mitochondrion"/>
    <property type="evidence" value="ECO:0000314"/>
    <property type="project" value="UniProtKB"/>
</dbReference>
<dbReference type="GO" id="GO:0005634">
    <property type="term" value="C:nucleus"/>
    <property type="evidence" value="ECO:0000314"/>
    <property type="project" value="UniProtKB"/>
</dbReference>
<dbReference type="GO" id="GO:0048471">
    <property type="term" value="C:perinuclear region of cytoplasm"/>
    <property type="evidence" value="ECO:0000314"/>
    <property type="project" value="UniProtKB"/>
</dbReference>
<dbReference type="GO" id="GO:0005886">
    <property type="term" value="C:plasma membrane"/>
    <property type="evidence" value="ECO:0000314"/>
    <property type="project" value="UniProtKB"/>
</dbReference>
<dbReference type="GO" id="GO:0005802">
    <property type="term" value="C:trans-Golgi network"/>
    <property type="evidence" value="ECO:0000314"/>
    <property type="project" value="UniProtKB"/>
</dbReference>
<dbReference type="GO" id="GO:0005497">
    <property type="term" value="F:androgen binding"/>
    <property type="evidence" value="ECO:0000314"/>
    <property type="project" value="UniProtKB"/>
</dbReference>
<dbReference type="GO" id="GO:0004930">
    <property type="term" value="F:G protein-coupled receptor activity"/>
    <property type="evidence" value="ECO:0000314"/>
    <property type="project" value="UniProtKB"/>
</dbReference>
<dbReference type="GO" id="GO:0022883">
    <property type="term" value="F:zinc efflux transmembrane transporter activity"/>
    <property type="evidence" value="ECO:0000314"/>
    <property type="project" value="UniProtKB"/>
</dbReference>
<dbReference type="GO" id="GO:0005385">
    <property type="term" value="F:zinc ion transmembrane transporter activity"/>
    <property type="evidence" value="ECO:0000314"/>
    <property type="project" value="UniProtKB"/>
</dbReference>
<dbReference type="GO" id="GO:0070830">
    <property type="term" value="P:bicellular tight junction assembly"/>
    <property type="evidence" value="ECO:0000250"/>
    <property type="project" value="UniProtKB"/>
</dbReference>
<dbReference type="GO" id="GO:0006882">
    <property type="term" value="P:intracellular zinc ion homeostasis"/>
    <property type="evidence" value="ECO:0000314"/>
    <property type="project" value="UniProtKB"/>
</dbReference>
<dbReference type="GO" id="GO:2000654">
    <property type="term" value="P:regulation of cellular response to testosterone stimulus"/>
    <property type="evidence" value="ECO:0000250"/>
    <property type="project" value="UniProtKB"/>
</dbReference>
<dbReference type="GO" id="GO:1905562">
    <property type="term" value="P:regulation of vascular endothelial cell proliferation"/>
    <property type="evidence" value="ECO:0000315"/>
    <property type="project" value="UniProtKB"/>
</dbReference>
<dbReference type="GO" id="GO:0071577">
    <property type="term" value="P:zinc ion transmembrane transport"/>
    <property type="evidence" value="ECO:0000314"/>
    <property type="project" value="UniProtKB"/>
</dbReference>
<dbReference type="InterPro" id="IPR003689">
    <property type="entry name" value="ZIP"/>
</dbReference>
<dbReference type="InterPro" id="IPR045891">
    <property type="entry name" value="ZIP9"/>
</dbReference>
<dbReference type="PANTHER" id="PTHR16133">
    <property type="entry name" value="SOLUTE CARRIER FAMILY 39 ZINC TRANSPORTER , MEMBER 9-RELATED"/>
    <property type="match status" value="1"/>
</dbReference>
<dbReference type="PANTHER" id="PTHR16133:SF5">
    <property type="entry name" value="ZINC TRANSPORTER ZIP9"/>
    <property type="match status" value="1"/>
</dbReference>
<dbReference type="Pfam" id="PF02535">
    <property type="entry name" value="Zip"/>
    <property type="match status" value="1"/>
</dbReference>
<comment type="function">
    <text evidence="1 2 5 6 7 8 9">Transports zinc ions across cell and organelle membranes into the cytoplasm and regulates intracellular zinc homeostasis (PubMed:19420709, PubMed:25014355, PubMed:28219737). Participates in the zinc ions efflux out of the secretory compartments (PubMed:19420709). Regulates intracellular zinc level, resulting in the enhancement of AKT1 and MAPK3/MAPK1 (Erk1/2) phosphorylation in response to the BCR activation (PubMed:23505453). Also functions as a membrane androgen receptor that mediates, through a G protein, the non-classical androgen signaling pathway, characterized by the activation of MAPK3/MAPK1 (Erk1/2) and transcription factors CREB1 or ATF1 (By similarity). This pathway contributes to CLDN1 and CLDN5 expression and tight junction formation between adjacent Sertoli cells (By similarity). Mediates androgen-induced vascular endothelial cell proliferation through activation of an inhibitory G protein leading to the AKT1 and MAPK3/MAPK1 (Erk1/2) activation which in turn modulate inhibition (phosphorylation) of GSK3B and CCND1 transcription (PubMed:34555425). Moreover, has dual functions as a membrane-bound androgen receptor and as an androgen-dependent zinc transporter both of which are mediated through an inhibitory G protein (Gi) that mediates both MAP kinase and zinc signaling leading to the androgen-dependent apoptotic process (PubMed:25014355, PubMed:28219737).</text>
</comment>
<comment type="catalytic activity">
    <reaction evidence="5 7 14">
        <text>Zn(2+)(in) = Zn(2+)(out)</text>
        <dbReference type="Rhea" id="RHEA:29351"/>
        <dbReference type="ChEBI" id="CHEBI:29105"/>
    </reaction>
</comment>
<comment type="interaction">
    <interactant intactId="EBI-2823239">
        <id>Q9NUM3</id>
    </interactant>
    <interactant intactId="EBI-12109402">
        <id>Q86W74-2</id>
        <label>ANKRD46</label>
    </interactant>
    <organismsDiffer>false</organismsDiffer>
    <experiments>3</experiments>
</comment>
<comment type="interaction">
    <interactant intactId="EBI-2823239">
        <id>Q9NUM3</id>
    </interactant>
    <interactant intactId="EBI-2606935">
        <id>Q96BI3</id>
        <label>APH1A</label>
    </interactant>
    <organismsDiffer>false</organismsDiffer>
    <experiments>3</experiments>
</comment>
<comment type="interaction">
    <interactant intactId="EBI-2823239">
        <id>Q9NUM3</id>
    </interactant>
    <interactant intactId="EBI-13059134">
        <id>Q13520</id>
        <label>AQP6</label>
    </interactant>
    <organismsDiffer>false</organismsDiffer>
    <experiments>3</experiments>
</comment>
<comment type="interaction">
    <interactant intactId="EBI-2823239">
        <id>Q9NUM3</id>
    </interactant>
    <interactant intactId="EBI-752094">
        <id>Q12982</id>
        <label>BNIP2</label>
    </interactant>
    <organismsDiffer>false</organismsDiffer>
    <experiments>3</experiments>
</comment>
<comment type="interaction">
    <interactant intactId="EBI-2823239">
        <id>Q9NUM3</id>
    </interactant>
    <interactant intactId="EBI-19051169">
        <id>Q8N350-4</id>
        <label>CBARP</label>
    </interactant>
    <organismsDiffer>false</organismsDiffer>
    <experiments>3</experiments>
</comment>
<comment type="interaction">
    <interactant intactId="EBI-2823239">
        <id>Q9NUM3</id>
    </interactant>
    <interactant intactId="EBI-7797864">
        <id>P11912</id>
        <label>CD79A</label>
    </interactant>
    <organismsDiffer>false</organismsDiffer>
    <experiments>3</experiments>
</comment>
<comment type="interaction">
    <interactant intactId="EBI-2823239">
        <id>Q9NUM3</id>
    </interactant>
    <interactant intactId="EBI-18202821">
        <id>Q8IU89</id>
        <label>CERS3</label>
    </interactant>
    <organismsDiffer>false</organismsDiffer>
    <experiments>3</experiments>
</comment>
<comment type="interaction">
    <interactant intactId="EBI-2823239">
        <id>Q9NUM3</id>
    </interactant>
    <interactant intactId="EBI-18013275">
        <id>Q7Z7G2</id>
        <label>CPLX4</label>
    </interactant>
    <organismsDiffer>false</organismsDiffer>
    <experiments>3</experiments>
</comment>
<comment type="interaction">
    <interactant intactId="EBI-2823239">
        <id>Q9NUM3</id>
    </interactant>
    <interactant intactId="EBI-17233035">
        <id>Q9BUF7-2</id>
        <label>CRB3</label>
    </interactant>
    <organismsDiffer>false</organismsDiffer>
    <experiments>3</experiments>
</comment>
<comment type="interaction">
    <interactant intactId="EBI-2823239">
        <id>Q9NUM3</id>
    </interactant>
    <interactant intactId="EBI-6942903">
        <id>Q96BA8</id>
        <label>CREB3L1</label>
    </interactant>
    <organismsDiffer>false</organismsDiffer>
    <experiments>3</experiments>
</comment>
<comment type="interaction">
    <interactant intactId="EBI-2823239">
        <id>Q9NUM3</id>
    </interactant>
    <interactant intactId="EBI-852194">
        <id>Q68CJ9</id>
        <label>CREB3L3</label>
    </interactant>
    <organismsDiffer>false</organismsDiffer>
    <experiments>3</experiments>
</comment>
<comment type="interaction">
    <interactant intactId="EBI-2823239">
        <id>Q9NUM3</id>
    </interactant>
    <interactant intactId="EBI-1058710">
        <id>O43169</id>
        <label>CYB5B</label>
    </interactant>
    <organismsDiffer>false</organismsDiffer>
    <experiments>3</experiments>
</comment>
<comment type="interaction">
    <interactant intactId="EBI-2823239">
        <id>Q9NUM3</id>
    </interactant>
    <interactant intactId="EBI-11037623">
        <id>Q9NYP7</id>
        <label>ELOVL5</label>
    </interactant>
    <organismsDiffer>false</organismsDiffer>
    <experiments>3</experiments>
</comment>
<comment type="interaction">
    <interactant intactId="EBI-2823239">
        <id>Q9NUM3</id>
    </interactant>
    <interactant intactId="EBI-17640610">
        <id>P34910-2</id>
        <label>EVI2B</label>
    </interactant>
    <organismsDiffer>false</organismsDiffer>
    <experiments>3</experiments>
</comment>
<comment type="interaction">
    <interactant intactId="EBI-2823239">
        <id>Q9NUM3</id>
    </interactant>
    <interactant intactId="EBI-2833872">
        <id>O15552</id>
        <label>FFAR2</label>
    </interactant>
    <organismsDiffer>false</organismsDiffer>
    <experiments>3</experiments>
</comment>
<comment type="interaction">
    <interactant intactId="EBI-2823239">
        <id>Q9NUM3</id>
    </interactant>
    <interactant intactId="EBI-17458373">
        <id>P48165</id>
        <label>GJA8</label>
    </interactant>
    <organismsDiffer>false</organismsDiffer>
    <experiments>3</experiments>
</comment>
<comment type="interaction">
    <interactant intactId="EBI-2823239">
        <id>Q9NUM3</id>
    </interactant>
    <interactant intactId="EBI-17935713">
        <id>Q96P66</id>
        <label>GPR101</label>
    </interactant>
    <organismsDiffer>false</organismsDiffer>
    <experiments>3</experiments>
</comment>
<comment type="interaction">
    <interactant intactId="EBI-2823239">
        <id>Q9NUM3</id>
    </interactant>
    <interactant intactId="EBI-2868124">
        <id>Q9BSE4</id>
        <label>HERPUD2</label>
    </interactant>
    <organismsDiffer>false</organismsDiffer>
    <experiments>3</experiments>
</comment>
<comment type="interaction">
    <interactant intactId="EBI-2823239">
        <id>Q9NUM3</id>
    </interactant>
    <interactant intactId="EBI-994141">
        <id>P28335</id>
        <label>HTR2C</label>
    </interactant>
    <organismsDiffer>false</organismsDiffer>
    <experiments>3</experiments>
</comment>
<comment type="interaction">
    <interactant intactId="EBI-2823239">
        <id>Q9NUM3</id>
    </interactant>
    <interactant intactId="EBI-12133176">
        <id>Q9UIQ6-2</id>
        <label>LNPEP</label>
    </interactant>
    <organismsDiffer>false</organismsDiffer>
    <experiments>3</experiments>
</comment>
<comment type="interaction">
    <interactant intactId="EBI-2823239">
        <id>Q9NUM3</id>
    </interactant>
    <interactant intactId="EBI-3867271">
        <id>Q9NQG1</id>
        <label>MANBAL</label>
    </interactant>
    <organismsDiffer>false</organismsDiffer>
    <experiments>3</experiments>
</comment>
<comment type="interaction">
    <interactant intactId="EBI-2823239">
        <id>Q9NUM3</id>
    </interactant>
    <interactant intactId="EBI-373355">
        <id>Q5SR56</id>
        <label>MFSD14B</label>
    </interactant>
    <organismsDiffer>false</organismsDiffer>
    <experiments>3</experiments>
</comment>
<comment type="interaction">
    <interactant intactId="EBI-2823239">
        <id>Q9NUM3</id>
    </interactant>
    <interactant intactId="EBI-3920969">
        <id>Q6N075</id>
        <label>MFSD5</label>
    </interactant>
    <organismsDiffer>false</organismsDiffer>
    <experiments>3</experiments>
</comment>
<comment type="interaction">
    <interactant intactId="EBI-2823239">
        <id>Q9NUM3</id>
    </interactant>
    <interactant intactId="EBI-724754">
        <id>O14880</id>
        <label>MGST3</label>
    </interactant>
    <organismsDiffer>false</organismsDiffer>
    <experiments>3</experiments>
</comment>
<comment type="interaction">
    <interactant intactId="EBI-2823239">
        <id>Q9NUM3</id>
    </interactant>
    <interactant intactId="EBI-721517">
        <id>Q99519</id>
        <label>NEU1</label>
    </interactant>
    <organismsDiffer>false</organismsDiffer>
    <experiments>3</experiments>
</comment>
<comment type="interaction">
    <interactant intactId="EBI-2823239">
        <id>Q9NUM3</id>
    </interactant>
    <interactant intactId="EBI-10244780">
        <id>Q5QGT7</id>
        <label>RTP2</label>
    </interactant>
    <organismsDiffer>false</organismsDiffer>
    <experiments>3</experiments>
</comment>
<comment type="interaction">
    <interactant intactId="EBI-2823239">
        <id>Q9NUM3</id>
    </interactant>
    <interactant intactId="EBI-18159983">
        <id>Q3KNW5</id>
        <label>SLC10A6</label>
    </interactant>
    <organismsDiffer>false</organismsDiffer>
    <experiments>3</experiments>
</comment>
<comment type="interaction">
    <interactant intactId="EBI-2823239">
        <id>Q9NUM3</id>
    </interactant>
    <interactant intactId="EBI-12898013">
        <id>Q9NP94</id>
        <label>SLC39A2</label>
    </interactant>
    <organismsDiffer>false</organismsDiffer>
    <experiments>3</experiments>
</comment>
<comment type="interaction">
    <interactant intactId="EBI-2823239">
        <id>Q9NUM3</id>
    </interactant>
    <interactant intactId="EBI-12889586">
        <id>Q6ZP29-3</id>
        <label>SLC66A1</label>
    </interactant>
    <organismsDiffer>false</organismsDiffer>
    <experiments>3</experiments>
</comment>
<comment type="interaction">
    <interactant intactId="EBI-2823239">
        <id>Q9NUM3</id>
    </interactant>
    <interactant intactId="EBI-4289564">
        <id>P30825</id>
        <label>SLC7A1</label>
    </interactant>
    <organismsDiffer>false</organismsDiffer>
    <experiments>3</experiments>
</comment>
<comment type="interaction">
    <interactant intactId="EBI-2823239">
        <id>Q9NUM3</id>
    </interactant>
    <interactant intactId="EBI-17280858">
        <id>Q8WWF3</id>
        <label>SSMEM1</label>
    </interactant>
    <organismsDiffer>false</organismsDiffer>
    <experiments>3</experiments>
</comment>
<comment type="interaction">
    <interactant intactId="EBI-2823239">
        <id>Q9NUM3</id>
    </interactant>
    <interactant intactId="EBI-13351685">
        <id>Q96CE8</id>
        <label>TM4SF18</label>
    </interactant>
    <organismsDiffer>false</organismsDiffer>
    <experiments>3</experiments>
</comment>
<comment type="interaction">
    <interactant intactId="EBI-2823239">
        <id>Q9NUM3</id>
    </interactant>
    <interactant intactId="EBI-2844246">
        <id>Q9NV12</id>
        <label>TMEM140</label>
    </interactant>
    <organismsDiffer>false</organismsDiffer>
    <experiments>3</experiments>
</comment>
<comment type="interaction">
    <interactant intactId="EBI-2823239">
        <id>Q9NUM3</id>
    </interactant>
    <interactant intactId="EBI-10982110">
        <id>Q96Q45-2</id>
        <label>TMEM237</label>
    </interactant>
    <organismsDiffer>false</organismsDiffer>
    <experiments>3</experiments>
</comment>
<comment type="interaction">
    <interactant intactId="EBI-2823239">
        <id>Q9NUM3</id>
    </interactant>
    <interactant intactId="EBI-2548832">
        <id>Q8N661</id>
        <label>TMEM86B</label>
    </interactant>
    <organismsDiffer>false</organismsDiffer>
    <experiments>3</experiments>
</comment>
<comment type="interaction">
    <interactant intactId="EBI-2823239">
        <id>Q9NUM3</id>
    </interactant>
    <interactant intactId="EBI-18055230">
        <id>P34981</id>
        <label>TRHR</label>
    </interactant>
    <organismsDiffer>false</organismsDiffer>
    <experiments>3</experiments>
</comment>
<comment type="interaction">
    <interactant intactId="EBI-2823239">
        <id>Q9NUM3</id>
    </interactant>
    <interactant intactId="EBI-2800296">
        <id>Q96GC9</id>
        <label>VMP1</label>
    </interactant>
    <organismsDiffer>false</organismsDiffer>
    <experiments>3</experiments>
</comment>
<comment type="subcellular location">
    <subcellularLocation>
        <location evidence="5">Golgi apparatus</location>
        <location evidence="5">trans-Golgi network membrane</location>
    </subcellularLocation>
    <subcellularLocation>
        <location evidence="7 9">Cell membrane</location>
        <topology evidence="13">Multi-pass membrane protein</topology>
    </subcellularLocation>
    <subcellularLocation>
        <location evidence="7 9">Cytoplasm</location>
        <location evidence="7 9">Perinuclear region</location>
    </subcellularLocation>
    <subcellularLocation>
        <location evidence="7 9">Mitochondrion</location>
    </subcellularLocation>
    <subcellularLocation>
        <location evidence="7">Nucleus</location>
    </subcellularLocation>
</comment>
<comment type="alternative products">
    <event type="alternative splicing"/>
    <isoform>
        <id>Q9NUM3-1</id>
        <name>1</name>
        <sequence type="displayed"/>
    </isoform>
    <isoform>
        <id>Q9NUM3-2</id>
        <name>2</name>
        <sequence type="described" ref="VSP_027302"/>
    </isoform>
    <isoform>
        <id>Q9NUM3-3</id>
        <name>3</name>
        <sequence type="described" ref="VSP_054057 VSP_054058"/>
    </isoform>
</comment>
<comment type="tissue specificity">
    <text evidence="7">Highly expressed in pancreas, testis, and pituitary and moderately in the kidney, liver, uterus, heart, prostate, and brain, whereas expression is lower in the ovary and colon.</text>
</comment>
<comment type="induction">
    <text evidence="7">Up-regulated by testosterone in cancer cells.</text>
</comment>
<comment type="similarity">
    <text evidence="13">Belongs to the ZIP transporter (TC 2.A.5) family.</text>
</comment>
<organism>
    <name type="scientific">Homo sapiens</name>
    <name type="common">Human</name>
    <dbReference type="NCBI Taxonomy" id="9606"/>
    <lineage>
        <taxon>Eukaryota</taxon>
        <taxon>Metazoa</taxon>
        <taxon>Chordata</taxon>
        <taxon>Craniata</taxon>
        <taxon>Vertebrata</taxon>
        <taxon>Euteleostomi</taxon>
        <taxon>Mammalia</taxon>
        <taxon>Eutheria</taxon>
        <taxon>Euarchontoglires</taxon>
        <taxon>Primates</taxon>
        <taxon>Haplorrhini</taxon>
        <taxon>Catarrhini</taxon>
        <taxon>Hominidae</taxon>
        <taxon>Homo</taxon>
    </lineage>
</organism>
<protein>
    <recommendedName>
        <fullName evidence="13">Zinc transporter ZIP9</fullName>
    </recommendedName>
    <alternativeName>
        <fullName>Solute carrier family 39 member 9</fullName>
    </alternativeName>
    <alternativeName>
        <fullName>Zrt- and Irt-like protein 9</fullName>
        <shortName>ZIP-9</shortName>
    </alternativeName>
</protein>
<keyword id="KW-0025">Alternative splicing</keyword>
<keyword id="KW-1003">Cell membrane</keyword>
<keyword id="KW-0963">Cytoplasm</keyword>
<keyword id="KW-0325">Glycoprotein</keyword>
<keyword id="KW-0333">Golgi apparatus</keyword>
<keyword id="KW-0406">Ion transport</keyword>
<keyword id="KW-0472">Membrane</keyword>
<keyword id="KW-0496">Mitochondrion</keyword>
<keyword id="KW-0539">Nucleus</keyword>
<keyword id="KW-1267">Proteomics identification</keyword>
<keyword id="KW-1185">Reference proteome</keyword>
<keyword id="KW-0812">Transmembrane</keyword>
<keyword id="KW-1133">Transmembrane helix</keyword>
<keyword id="KW-0813">Transport</keyword>
<keyword id="KW-0862">Zinc</keyword>
<keyword id="KW-0864">Zinc transport</keyword>
<evidence type="ECO:0000250" key="1">
    <source>
        <dbReference type="UniProtKB" id="Q3KR82"/>
    </source>
</evidence>
<evidence type="ECO:0000250" key="2">
    <source>
        <dbReference type="UniProtKB" id="Q8BFU1"/>
    </source>
</evidence>
<evidence type="ECO:0000255" key="3"/>
<evidence type="ECO:0000269" key="4">
    <source>
    </source>
</evidence>
<evidence type="ECO:0000269" key="5">
    <source>
    </source>
</evidence>
<evidence type="ECO:0000269" key="6">
    <source>
    </source>
</evidence>
<evidence type="ECO:0000269" key="7">
    <source>
    </source>
</evidence>
<evidence type="ECO:0000269" key="8">
    <source>
    </source>
</evidence>
<evidence type="ECO:0000269" key="9">
    <source>
    </source>
</evidence>
<evidence type="ECO:0000269" key="10">
    <source ref="3"/>
</evidence>
<evidence type="ECO:0000303" key="11">
    <source>
    </source>
</evidence>
<evidence type="ECO:0000303" key="12">
    <source ref="3"/>
</evidence>
<evidence type="ECO:0000305" key="13"/>
<evidence type="ECO:0000305" key="14">
    <source>
    </source>
</evidence>
<evidence type="ECO:0000312" key="15">
    <source>
        <dbReference type="HGNC" id="HGNC:20182"/>
    </source>
</evidence>
<feature type="chain" id="PRO_0000297597" description="Zinc transporter ZIP9">
    <location>
        <begin position="1"/>
        <end position="307"/>
    </location>
</feature>
<feature type="transmembrane region" description="Helical" evidence="3">
    <location>
        <begin position="4"/>
        <end position="24"/>
    </location>
</feature>
<feature type="transmembrane region" description="Helical" evidence="3">
    <location>
        <begin position="35"/>
        <end position="55"/>
    </location>
</feature>
<feature type="transmembrane region" description="Helical" evidence="3">
    <location>
        <begin position="106"/>
        <end position="126"/>
    </location>
</feature>
<feature type="transmembrane region" description="Helical" evidence="3">
    <location>
        <begin position="146"/>
        <end position="166"/>
    </location>
</feature>
<feature type="transmembrane region" description="Helical" evidence="3">
    <location>
        <begin position="176"/>
        <end position="196"/>
    </location>
</feature>
<feature type="transmembrane region" description="Helical" evidence="3">
    <location>
        <begin position="210"/>
        <end position="230"/>
    </location>
</feature>
<feature type="transmembrane region" description="Helical" evidence="3">
    <location>
        <begin position="244"/>
        <end position="264"/>
    </location>
</feature>
<feature type="transmembrane region" description="Helical" evidence="3">
    <location>
        <begin position="286"/>
        <end position="306"/>
    </location>
</feature>
<feature type="glycosylation site" description="N-linked (GlcNAc...) asparagine" evidence="3">
    <location>
        <position position="29"/>
    </location>
</feature>
<feature type="glycosylation site" description="N-linked (GlcNAc...) asparagine" evidence="3">
    <location>
        <position position="241"/>
    </location>
</feature>
<feature type="splice variant" id="VSP_027302" description="In isoform 2." evidence="12">
    <location>
        <begin position="135"/>
        <end position="157"/>
    </location>
</feature>
<feature type="splice variant" id="VSP_054057" description="In isoform 3." evidence="11">
    <original>S</original>
    <variation>D</variation>
    <location>
        <position position="232"/>
    </location>
</feature>
<feature type="splice variant" id="VSP_054058" description="In isoform 3." evidence="11">
    <location>
        <begin position="233"/>
        <end position="307"/>
    </location>
</feature>
<feature type="sequence variant" id="VAR_034648" description="In dbSNP:rs2296723.">
    <original>E</original>
    <variation>D</variation>
    <location>
        <position position="64"/>
    </location>
</feature>
<feature type="sequence variant" id="VAR_034649" description="In dbSNP:rs2232059." evidence="10">
    <original>M</original>
    <variation>T</variation>
    <location>
        <position position="221"/>
    </location>
</feature>
<feature type="sequence variant" id="VAR_034650" description="In dbSNP:rs17855898." evidence="4">
    <original>R</original>
    <variation>C</variation>
    <location>
        <position position="285"/>
    </location>
</feature>
<feature type="sequence conflict" description="In Ref. 2; BAD96267." evidence="13" ref="2">
    <original>V</original>
    <variation>M</variation>
    <location>
        <position position="122"/>
    </location>
</feature>